<reference key="1">
    <citation type="journal article" date="1997" name="Nature">
        <title>The complete genome sequence of the hyperthermophilic, sulphate-reducing archaeon Archaeoglobus fulgidus.</title>
        <authorList>
            <person name="Klenk H.-P."/>
            <person name="Clayton R.A."/>
            <person name="Tomb J.-F."/>
            <person name="White O."/>
            <person name="Nelson K.E."/>
            <person name="Ketchum K.A."/>
            <person name="Dodson R.J."/>
            <person name="Gwinn M.L."/>
            <person name="Hickey E.K."/>
            <person name="Peterson J.D."/>
            <person name="Richardson D.L."/>
            <person name="Kerlavage A.R."/>
            <person name="Graham D.E."/>
            <person name="Kyrpides N.C."/>
            <person name="Fleischmann R.D."/>
            <person name="Quackenbush J."/>
            <person name="Lee N.H."/>
            <person name="Sutton G.G."/>
            <person name="Gill S.R."/>
            <person name="Kirkness E.F."/>
            <person name="Dougherty B.A."/>
            <person name="McKenney K."/>
            <person name="Adams M.D."/>
            <person name="Loftus B.J."/>
            <person name="Peterson S.N."/>
            <person name="Reich C.I."/>
            <person name="McNeil L.K."/>
            <person name="Badger J.H."/>
            <person name="Glodek A."/>
            <person name="Zhou L."/>
            <person name="Overbeek R."/>
            <person name="Gocayne J.D."/>
            <person name="Weidman J.F."/>
            <person name="McDonald L.A."/>
            <person name="Utterback T.R."/>
            <person name="Cotton M.D."/>
            <person name="Spriggs T."/>
            <person name="Artiach P."/>
            <person name="Kaine B.P."/>
            <person name="Sykes S.M."/>
            <person name="Sadow P.W."/>
            <person name="D'Andrea K.P."/>
            <person name="Bowman C."/>
            <person name="Fujii C."/>
            <person name="Garland S.A."/>
            <person name="Mason T.M."/>
            <person name="Olsen G.J."/>
            <person name="Fraser C.M."/>
            <person name="Smith H.O."/>
            <person name="Woese C.R."/>
            <person name="Venter J.C."/>
        </authorList>
    </citation>
    <scope>NUCLEOTIDE SEQUENCE [LARGE SCALE GENOMIC DNA]</scope>
    <source>
        <strain>ATCC 49558 / DSM 4304 / JCM 9628 / NBRC 100126 / VC-16</strain>
    </source>
</reference>
<dbReference type="EC" id="6.3.1.5" evidence="1"/>
<dbReference type="EMBL" id="AE000782">
    <property type="protein sequence ID" value="AAB90242.1"/>
    <property type="molecule type" value="Genomic_DNA"/>
</dbReference>
<dbReference type="PIR" id="H69374">
    <property type="entry name" value="H69374"/>
</dbReference>
<dbReference type="RefSeq" id="WP_010878500.1">
    <property type="nucleotide sequence ID" value="NC_000917.1"/>
</dbReference>
<dbReference type="SMR" id="O29262"/>
<dbReference type="STRING" id="224325.AF_1000"/>
<dbReference type="PaxDb" id="224325-AF_1000"/>
<dbReference type="EnsemblBacteria" id="AAB90242">
    <property type="protein sequence ID" value="AAB90242"/>
    <property type="gene ID" value="AF_1000"/>
</dbReference>
<dbReference type="GeneID" id="24794605"/>
<dbReference type="KEGG" id="afu:AF_1000"/>
<dbReference type="eggNOG" id="arCOG00069">
    <property type="taxonomic scope" value="Archaea"/>
</dbReference>
<dbReference type="HOGENOM" id="CLU_059327_1_1_2"/>
<dbReference type="OrthoDB" id="39312at2157"/>
<dbReference type="PhylomeDB" id="O29262"/>
<dbReference type="UniPathway" id="UPA00253">
    <property type="reaction ID" value="UER00333"/>
</dbReference>
<dbReference type="Proteomes" id="UP000002199">
    <property type="component" value="Chromosome"/>
</dbReference>
<dbReference type="GO" id="GO:0005737">
    <property type="term" value="C:cytoplasm"/>
    <property type="evidence" value="ECO:0007669"/>
    <property type="project" value="InterPro"/>
</dbReference>
<dbReference type="GO" id="GO:0005524">
    <property type="term" value="F:ATP binding"/>
    <property type="evidence" value="ECO:0007669"/>
    <property type="project" value="UniProtKB-UniRule"/>
</dbReference>
<dbReference type="GO" id="GO:0004359">
    <property type="term" value="F:glutaminase activity"/>
    <property type="evidence" value="ECO:0007669"/>
    <property type="project" value="InterPro"/>
</dbReference>
<dbReference type="GO" id="GO:0046872">
    <property type="term" value="F:metal ion binding"/>
    <property type="evidence" value="ECO:0007669"/>
    <property type="project" value="UniProtKB-KW"/>
</dbReference>
<dbReference type="GO" id="GO:0003952">
    <property type="term" value="F:NAD+ synthase (glutamine-hydrolyzing) activity"/>
    <property type="evidence" value="ECO:0007669"/>
    <property type="project" value="InterPro"/>
</dbReference>
<dbReference type="GO" id="GO:0008795">
    <property type="term" value="F:NAD+ synthase activity"/>
    <property type="evidence" value="ECO:0007669"/>
    <property type="project" value="UniProtKB-UniRule"/>
</dbReference>
<dbReference type="GO" id="GO:0009435">
    <property type="term" value="P:NAD biosynthetic process"/>
    <property type="evidence" value="ECO:0007669"/>
    <property type="project" value="UniProtKB-UniRule"/>
</dbReference>
<dbReference type="CDD" id="cd00553">
    <property type="entry name" value="NAD_synthase"/>
    <property type="match status" value="1"/>
</dbReference>
<dbReference type="FunFam" id="3.40.50.620:FF:000106">
    <property type="entry name" value="Glutamine-dependent NAD(+) synthetase"/>
    <property type="match status" value="1"/>
</dbReference>
<dbReference type="Gene3D" id="3.40.50.620">
    <property type="entry name" value="HUPs"/>
    <property type="match status" value="1"/>
</dbReference>
<dbReference type="HAMAP" id="MF_00193">
    <property type="entry name" value="NadE_ammonia_dep"/>
    <property type="match status" value="1"/>
</dbReference>
<dbReference type="InterPro" id="IPR022310">
    <property type="entry name" value="NAD/GMP_synthase"/>
</dbReference>
<dbReference type="InterPro" id="IPR003694">
    <property type="entry name" value="NAD_synthase"/>
</dbReference>
<dbReference type="InterPro" id="IPR022926">
    <property type="entry name" value="NH(3)-dep_NAD(+)_synth"/>
</dbReference>
<dbReference type="InterPro" id="IPR014729">
    <property type="entry name" value="Rossmann-like_a/b/a_fold"/>
</dbReference>
<dbReference type="NCBIfam" id="TIGR00552">
    <property type="entry name" value="nadE"/>
    <property type="match status" value="1"/>
</dbReference>
<dbReference type="NCBIfam" id="NF010587">
    <property type="entry name" value="PRK13980.1"/>
    <property type="match status" value="1"/>
</dbReference>
<dbReference type="PANTHER" id="PTHR23090:SF9">
    <property type="entry name" value="GLUTAMINE-DEPENDENT NAD(+) SYNTHETASE"/>
    <property type="match status" value="1"/>
</dbReference>
<dbReference type="PANTHER" id="PTHR23090">
    <property type="entry name" value="NH 3 /GLUTAMINE-DEPENDENT NAD + SYNTHETASE"/>
    <property type="match status" value="1"/>
</dbReference>
<dbReference type="Pfam" id="PF02540">
    <property type="entry name" value="NAD_synthase"/>
    <property type="match status" value="1"/>
</dbReference>
<dbReference type="SUPFAM" id="SSF52402">
    <property type="entry name" value="Adenine nucleotide alpha hydrolases-like"/>
    <property type="match status" value="1"/>
</dbReference>
<feature type="chain" id="PRO_0000152221" description="NH(3)-dependent NAD(+) synthetase">
    <location>
        <begin position="1"/>
        <end position="247"/>
    </location>
</feature>
<feature type="binding site" evidence="1">
    <location>
        <begin position="29"/>
        <end position="36"/>
    </location>
    <ligand>
        <name>ATP</name>
        <dbReference type="ChEBI" id="CHEBI:30616"/>
    </ligand>
</feature>
<feature type="binding site" evidence="1">
    <location>
        <position position="35"/>
    </location>
    <ligand>
        <name>Mg(2+)</name>
        <dbReference type="ChEBI" id="CHEBI:18420"/>
    </ligand>
</feature>
<feature type="binding site" evidence="1">
    <location>
        <position position="112"/>
    </location>
    <ligand>
        <name>deamido-NAD(+)</name>
        <dbReference type="ChEBI" id="CHEBI:58437"/>
    </ligand>
</feature>
<feature type="binding site" evidence="1">
    <location>
        <position position="132"/>
    </location>
    <ligand>
        <name>ATP</name>
        <dbReference type="ChEBI" id="CHEBI:30616"/>
    </ligand>
</feature>
<feature type="binding site" evidence="1">
    <location>
        <position position="137"/>
    </location>
    <ligand>
        <name>Mg(2+)</name>
        <dbReference type="ChEBI" id="CHEBI:18420"/>
    </ligand>
</feature>
<feature type="binding site" evidence="1">
    <location>
        <position position="145"/>
    </location>
    <ligand>
        <name>deamido-NAD(+)</name>
        <dbReference type="ChEBI" id="CHEBI:58437"/>
    </ligand>
</feature>
<feature type="binding site" evidence="1">
    <location>
        <position position="152"/>
    </location>
    <ligand>
        <name>deamido-NAD(+)</name>
        <dbReference type="ChEBI" id="CHEBI:58437"/>
    </ligand>
</feature>
<feature type="binding site" evidence="1">
    <location>
        <position position="161"/>
    </location>
    <ligand>
        <name>ATP</name>
        <dbReference type="ChEBI" id="CHEBI:30616"/>
    </ligand>
</feature>
<feature type="binding site" evidence="1">
    <location>
        <position position="183"/>
    </location>
    <ligand>
        <name>ATP</name>
        <dbReference type="ChEBI" id="CHEBI:30616"/>
    </ligand>
</feature>
<feature type="binding site" evidence="1">
    <location>
        <begin position="233"/>
        <end position="234"/>
    </location>
    <ligand>
        <name>deamido-NAD(+)</name>
        <dbReference type="ChEBI" id="CHEBI:58437"/>
    </ligand>
</feature>
<protein>
    <recommendedName>
        <fullName evidence="1">NH(3)-dependent NAD(+) synthetase</fullName>
        <ecNumber evidence="1">6.3.1.5</ecNumber>
    </recommendedName>
</protein>
<evidence type="ECO:0000255" key="1">
    <source>
        <dbReference type="HAMAP-Rule" id="MF_00193"/>
    </source>
</evidence>
<evidence type="ECO:0000305" key="2"/>
<keyword id="KW-0067">ATP-binding</keyword>
<keyword id="KW-0436">Ligase</keyword>
<keyword id="KW-0460">Magnesium</keyword>
<keyword id="KW-0479">Metal-binding</keyword>
<keyword id="KW-0520">NAD</keyword>
<keyword id="KW-0547">Nucleotide-binding</keyword>
<keyword id="KW-1185">Reference proteome</keyword>
<proteinExistence type="inferred from homology"/>
<accession>O29262</accession>
<organism>
    <name type="scientific">Archaeoglobus fulgidus (strain ATCC 49558 / DSM 4304 / JCM 9628 / NBRC 100126 / VC-16)</name>
    <dbReference type="NCBI Taxonomy" id="224325"/>
    <lineage>
        <taxon>Archaea</taxon>
        <taxon>Methanobacteriati</taxon>
        <taxon>Methanobacteriota</taxon>
        <taxon>Archaeoglobi</taxon>
        <taxon>Archaeoglobales</taxon>
        <taxon>Archaeoglobaceae</taxon>
        <taxon>Archaeoglobus</taxon>
    </lineage>
</organism>
<comment type="function">
    <text evidence="1">Catalyzes the ATP-dependent amidation of deamido-NAD to form NAD. Uses ammonia as a nitrogen source.</text>
</comment>
<comment type="catalytic activity">
    <reaction evidence="1">
        <text>deamido-NAD(+) + NH4(+) + ATP = AMP + diphosphate + NAD(+) + H(+)</text>
        <dbReference type="Rhea" id="RHEA:21188"/>
        <dbReference type="ChEBI" id="CHEBI:15378"/>
        <dbReference type="ChEBI" id="CHEBI:28938"/>
        <dbReference type="ChEBI" id="CHEBI:30616"/>
        <dbReference type="ChEBI" id="CHEBI:33019"/>
        <dbReference type="ChEBI" id="CHEBI:57540"/>
        <dbReference type="ChEBI" id="CHEBI:58437"/>
        <dbReference type="ChEBI" id="CHEBI:456215"/>
        <dbReference type="EC" id="6.3.1.5"/>
    </reaction>
</comment>
<comment type="pathway">
    <text evidence="1">Cofactor biosynthesis; NAD(+) biosynthesis; NAD(+) from deamido-NAD(+) (ammonia route): step 1/1.</text>
</comment>
<comment type="subunit">
    <text evidence="1">Homodimer.</text>
</comment>
<comment type="similarity">
    <text evidence="1 2">Belongs to the NAD synthetase family.</text>
</comment>
<sequence>MNFEKVVERICDFIRGVVSSSGSTGVVLGLSGGVDSATVAYLCVRALGSERVFALIMPETGVTPEQDVEDAINVAESLGMEYKLIEINDIVRVFKEKAGEGSKIAEANLKPRIRMVLNYYHANSMNRLVAGTGNKSELMVGYFTKYGDGGVDFLPIGDLYKTEVFQLAAYLGVPRRIIEKKPSARLWPGQTDEEEMGISYAELDEILKLIEKGERRDDEKFRRVVQMVERSRHKREMPPVARVRDLL</sequence>
<name>NADE_ARCFU</name>
<gene>
    <name evidence="1" type="primary">nadE</name>
    <name type="ordered locus">AF_1000</name>
</gene>